<accession>Q8D322</accession>
<reference key="1">
    <citation type="journal article" date="2002" name="Nat. Genet.">
        <title>Genome sequence of the endocellular obligate symbiont of tsetse flies, Wigglesworthia glossinidia.</title>
        <authorList>
            <person name="Akman L."/>
            <person name="Yamashita A."/>
            <person name="Watanabe H."/>
            <person name="Oshima K."/>
            <person name="Shiba T."/>
            <person name="Hattori M."/>
            <person name="Aksoy S."/>
        </authorList>
    </citation>
    <scope>NUCLEOTIDE SEQUENCE [LARGE SCALE GENOMIC DNA]</scope>
</reference>
<organism>
    <name type="scientific">Wigglesworthia glossinidia brevipalpis</name>
    <dbReference type="NCBI Taxonomy" id="36870"/>
    <lineage>
        <taxon>Bacteria</taxon>
        <taxon>Pseudomonadati</taxon>
        <taxon>Pseudomonadota</taxon>
        <taxon>Gammaproteobacteria</taxon>
        <taxon>Enterobacterales</taxon>
        <taxon>Erwiniaceae</taxon>
        <taxon>Wigglesworthia</taxon>
    </lineage>
</organism>
<name>PURA_WIGBR</name>
<sequence length="434" mass="48918">MKKNIIVLGAQWGDEGKGKVIDFLSKNINYVVRCQGGNNAGHTVVIKEEKTVLHLLPSSILNKNTINIISSGVVISPIDLVKEINMIEKKGISIKNRILISELCPLVLKYHVSMDVAREKNRKKKEIDSIGTTHRGIGPAYEDKIARRALRIHHLINKDKFKKKLKNIVEYYNFQLINYYKEQPVNHEKIFNELINKSKLLNNISIDIPSYLNSINKKNKSIIFEGAQGALLDIDYGTYPYVTSSNTTVGGIISSTGISPFSIKYILGIIKAYSTRVGNGPFPTEIFDETKNIILEKGKEFGSTTGRKRRIGWFDAVAVKRVIQINSFSGFCLTKIDVLDNIKEIKICTSYILPNGKILDNISNIDDWNKAKPIYKSMPGWLSKTKGVKNFKNLPILAKNYIKKLQSIIKIPIEIISTGSDRNDIIVLNKKLVE</sequence>
<gene>
    <name evidence="1" type="primary">purA</name>
    <name type="ordered locus">WIGBR1790</name>
</gene>
<keyword id="KW-0963">Cytoplasm</keyword>
<keyword id="KW-0342">GTP-binding</keyword>
<keyword id="KW-0436">Ligase</keyword>
<keyword id="KW-0460">Magnesium</keyword>
<keyword id="KW-0479">Metal-binding</keyword>
<keyword id="KW-0547">Nucleotide-binding</keyword>
<keyword id="KW-0658">Purine biosynthesis</keyword>
<keyword id="KW-1185">Reference proteome</keyword>
<feature type="chain" id="PRO_0000095258" description="Adenylosuccinate synthetase">
    <location>
        <begin position="1"/>
        <end position="434"/>
    </location>
</feature>
<feature type="active site" description="Proton acceptor" evidence="1">
    <location>
        <position position="14"/>
    </location>
</feature>
<feature type="active site" description="Proton donor" evidence="1">
    <location>
        <position position="42"/>
    </location>
</feature>
<feature type="binding site" evidence="1">
    <location>
        <begin position="13"/>
        <end position="19"/>
    </location>
    <ligand>
        <name>GTP</name>
        <dbReference type="ChEBI" id="CHEBI:37565"/>
    </ligand>
</feature>
<feature type="binding site" description="in other chain" evidence="1">
    <location>
        <begin position="14"/>
        <end position="17"/>
    </location>
    <ligand>
        <name>IMP</name>
        <dbReference type="ChEBI" id="CHEBI:58053"/>
        <note>ligand shared between dimeric partners</note>
    </ligand>
</feature>
<feature type="binding site" evidence="1">
    <location>
        <position position="14"/>
    </location>
    <ligand>
        <name>Mg(2+)</name>
        <dbReference type="ChEBI" id="CHEBI:18420"/>
    </ligand>
</feature>
<feature type="binding site" description="in other chain" evidence="1">
    <location>
        <begin position="39"/>
        <end position="42"/>
    </location>
    <ligand>
        <name>IMP</name>
        <dbReference type="ChEBI" id="CHEBI:58053"/>
        <note>ligand shared between dimeric partners</note>
    </ligand>
</feature>
<feature type="binding site" evidence="1">
    <location>
        <begin position="41"/>
        <end position="43"/>
    </location>
    <ligand>
        <name>GTP</name>
        <dbReference type="ChEBI" id="CHEBI:37565"/>
    </ligand>
</feature>
<feature type="binding site" evidence="1">
    <location>
        <position position="41"/>
    </location>
    <ligand>
        <name>Mg(2+)</name>
        <dbReference type="ChEBI" id="CHEBI:18420"/>
    </ligand>
</feature>
<feature type="binding site" description="in other chain" evidence="1">
    <location>
        <position position="133"/>
    </location>
    <ligand>
        <name>IMP</name>
        <dbReference type="ChEBI" id="CHEBI:58053"/>
        <note>ligand shared between dimeric partners</note>
    </ligand>
</feature>
<feature type="binding site" evidence="1">
    <location>
        <position position="147"/>
    </location>
    <ligand>
        <name>IMP</name>
        <dbReference type="ChEBI" id="CHEBI:58053"/>
        <note>ligand shared between dimeric partners</note>
    </ligand>
</feature>
<feature type="binding site" description="in other chain" evidence="1">
    <location>
        <position position="228"/>
    </location>
    <ligand>
        <name>IMP</name>
        <dbReference type="ChEBI" id="CHEBI:58053"/>
        <note>ligand shared between dimeric partners</note>
    </ligand>
</feature>
<feature type="binding site" description="in other chain" evidence="1">
    <location>
        <position position="243"/>
    </location>
    <ligand>
        <name>IMP</name>
        <dbReference type="ChEBI" id="CHEBI:58053"/>
        <note>ligand shared between dimeric partners</note>
    </ligand>
</feature>
<feature type="binding site" evidence="1">
    <location>
        <begin position="303"/>
        <end position="309"/>
    </location>
    <ligand>
        <name>substrate</name>
    </ligand>
</feature>
<feature type="binding site" description="in other chain" evidence="1">
    <location>
        <position position="307"/>
    </location>
    <ligand>
        <name>IMP</name>
        <dbReference type="ChEBI" id="CHEBI:58053"/>
        <note>ligand shared between dimeric partners</note>
    </ligand>
</feature>
<feature type="binding site" evidence="1">
    <location>
        <position position="309"/>
    </location>
    <ligand>
        <name>GTP</name>
        <dbReference type="ChEBI" id="CHEBI:37565"/>
    </ligand>
</feature>
<feature type="binding site" evidence="1">
    <location>
        <begin position="335"/>
        <end position="337"/>
    </location>
    <ligand>
        <name>GTP</name>
        <dbReference type="ChEBI" id="CHEBI:37565"/>
    </ligand>
</feature>
<feature type="binding site" evidence="1">
    <location>
        <begin position="417"/>
        <end position="419"/>
    </location>
    <ligand>
        <name>GTP</name>
        <dbReference type="ChEBI" id="CHEBI:37565"/>
    </ligand>
</feature>
<evidence type="ECO:0000255" key="1">
    <source>
        <dbReference type="HAMAP-Rule" id="MF_00011"/>
    </source>
</evidence>
<dbReference type="EC" id="6.3.4.4" evidence="1"/>
<dbReference type="EMBL" id="BA000021">
    <property type="protein sequence ID" value="BAC24325.1"/>
    <property type="molecule type" value="Genomic_DNA"/>
</dbReference>
<dbReference type="SMR" id="Q8D322"/>
<dbReference type="STRING" id="36870.gene:10368667"/>
<dbReference type="KEGG" id="wbr:purA"/>
<dbReference type="eggNOG" id="COG0104">
    <property type="taxonomic scope" value="Bacteria"/>
</dbReference>
<dbReference type="HOGENOM" id="CLU_029848_0_0_6"/>
<dbReference type="OrthoDB" id="9807553at2"/>
<dbReference type="UniPathway" id="UPA00075">
    <property type="reaction ID" value="UER00335"/>
</dbReference>
<dbReference type="Proteomes" id="UP000000562">
    <property type="component" value="Chromosome"/>
</dbReference>
<dbReference type="GO" id="GO:0005737">
    <property type="term" value="C:cytoplasm"/>
    <property type="evidence" value="ECO:0007669"/>
    <property type="project" value="UniProtKB-SubCell"/>
</dbReference>
<dbReference type="GO" id="GO:0004019">
    <property type="term" value="F:adenylosuccinate synthase activity"/>
    <property type="evidence" value="ECO:0007669"/>
    <property type="project" value="UniProtKB-UniRule"/>
</dbReference>
<dbReference type="GO" id="GO:0005525">
    <property type="term" value="F:GTP binding"/>
    <property type="evidence" value="ECO:0007669"/>
    <property type="project" value="UniProtKB-UniRule"/>
</dbReference>
<dbReference type="GO" id="GO:0000287">
    <property type="term" value="F:magnesium ion binding"/>
    <property type="evidence" value="ECO:0007669"/>
    <property type="project" value="UniProtKB-UniRule"/>
</dbReference>
<dbReference type="GO" id="GO:0044208">
    <property type="term" value="P:'de novo' AMP biosynthetic process"/>
    <property type="evidence" value="ECO:0007669"/>
    <property type="project" value="UniProtKB-UniRule"/>
</dbReference>
<dbReference type="GO" id="GO:0046040">
    <property type="term" value="P:IMP metabolic process"/>
    <property type="evidence" value="ECO:0007669"/>
    <property type="project" value="TreeGrafter"/>
</dbReference>
<dbReference type="CDD" id="cd03108">
    <property type="entry name" value="AdSS"/>
    <property type="match status" value="1"/>
</dbReference>
<dbReference type="FunFam" id="1.10.300.10:FF:000001">
    <property type="entry name" value="Adenylosuccinate synthetase"/>
    <property type="match status" value="1"/>
</dbReference>
<dbReference type="FunFam" id="3.90.170.10:FF:000001">
    <property type="entry name" value="Adenylosuccinate synthetase"/>
    <property type="match status" value="1"/>
</dbReference>
<dbReference type="Gene3D" id="3.40.440.10">
    <property type="entry name" value="Adenylosuccinate Synthetase, subunit A, domain 1"/>
    <property type="match status" value="1"/>
</dbReference>
<dbReference type="Gene3D" id="1.10.300.10">
    <property type="entry name" value="Adenylosuccinate Synthetase, subunit A, domain 2"/>
    <property type="match status" value="1"/>
</dbReference>
<dbReference type="Gene3D" id="3.90.170.10">
    <property type="entry name" value="Adenylosuccinate Synthetase, subunit A, domain 3"/>
    <property type="match status" value="1"/>
</dbReference>
<dbReference type="HAMAP" id="MF_00011">
    <property type="entry name" value="Adenylosucc_synth"/>
    <property type="match status" value="1"/>
</dbReference>
<dbReference type="InterPro" id="IPR018220">
    <property type="entry name" value="Adenylosuccin_syn_GTP-bd"/>
</dbReference>
<dbReference type="InterPro" id="IPR033128">
    <property type="entry name" value="Adenylosuccin_syn_Lys_AS"/>
</dbReference>
<dbReference type="InterPro" id="IPR042109">
    <property type="entry name" value="Adenylosuccinate_synth_dom1"/>
</dbReference>
<dbReference type="InterPro" id="IPR042110">
    <property type="entry name" value="Adenylosuccinate_synth_dom2"/>
</dbReference>
<dbReference type="InterPro" id="IPR042111">
    <property type="entry name" value="Adenylosuccinate_synth_dom3"/>
</dbReference>
<dbReference type="InterPro" id="IPR001114">
    <property type="entry name" value="Adenylosuccinate_synthetase"/>
</dbReference>
<dbReference type="InterPro" id="IPR027417">
    <property type="entry name" value="P-loop_NTPase"/>
</dbReference>
<dbReference type="NCBIfam" id="NF002223">
    <property type="entry name" value="PRK01117.1"/>
    <property type="match status" value="1"/>
</dbReference>
<dbReference type="NCBIfam" id="TIGR00184">
    <property type="entry name" value="purA"/>
    <property type="match status" value="1"/>
</dbReference>
<dbReference type="PANTHER" id="PTHR11846">
    <property type="entry name" value="ADENYLOSUCCINATE SYNTHETASE"/>
    <property type="match status" value="1"/>
</dbReference>
<dbReference type="PANTHER" id="PTHR11846:SF0">
    <property type="entry name" value="ADENYLOSUCCINATE SYNTHETASE"/>
    <property type="match status" value="1"/>
</dbReference>
<dbReference type="Pfam" id="PF00709">
    <property type="entry name" value="Adenylsucc_synt"/>
    <property type="match status" value="1"/>
</dbReference>
<dbReference type="SMART" id="SM00788">
    <property type="entry name" value="Adenylsucc_synt"/>
    <property type="match status" value="1"/>
</dbReference>
<dbReference type="SUPFAM" id="SSF52540">
    <property type="entry name" value="P-loop containing nucleoside triphosphate hydrolases"/>
    <property type="match status" value="1"/>
</dbReference>
<dbReference type="PROSITE" id="PS01266">
    <property type="entry name" value="ADENYLOSUCCIN_SYN_1"/>
    <property type="match status" value="1"/>
</dbReference>
<dbReference type="PROSITE" id="PS00513">
    <property type="entry name" value="ADENYLOSUCCIN_SYN_2"/>
    <property type="match status" value="1"/>
</dbReference>
<comment type="function">
    <text evidence="1">Plays an important role in the de novo pathway of purine nucleotide biosynthesis. Catalyzes the first committed step in the biosynthesis of AMP from IMP.</text>
</comment>
<comment type="catalytic activity">
    <reaction evidence="1">
        <text>IMP + L-aspartate + GTP = N(6)-(1,2-dicarboxyethyl)-AMP + GDP + phosphate + 2 H(+)</text>
        <dbReference type="Rhea" id="RHEA:15753"/>
        <dbReference type="ChEBI" id="CHEBI:15378"/>
        <dbReference type="ChEBI" id="CHEBI:29991"/>
        <dbReference type="ChEBI" id="CHEBI:37565"/>
        <dbReference type="ChEBI" id="CHEBI:43474"/>
        <dbReference type="ChEBI" id="CHEBI:57567"/>
        <dbReference type="ChEBI" id="CHEBI:58053"/>
        <dbReference type="ChEBI" id="CHEBI:58189"/>
        <dbReference type="EC" id="6.3.4.4"/>
    </reaction>
</comment>
<comment type="cofactor">
    <cofactor evidence="1">
        <name>Mg(2+)</name>
        <dbReference type="ChEBI" id="CHEBI:18420"/>
    </cofactor>
    <text evidence="1">Binds 1 Mg(2+) ion per subunit.</text>
</comment>
<comment type="pathway">
    <text evidence="1">Purine metabolism; AMP biosynthesis via de novo pathway; AMP from IMP: step 1/2.</text>
</comment>
<comment type="subunit">
    <text evidence="1">Homodimer.</text>
</comment>
<comment type="subcellular location">
    <subcellularLocation>
        <location evidence="1">Cytoplasm</location>
    </subcellularLocation>
</comment>
<comment type="similarity">
    <text evidence="1">Belongs to the adenylosuccinate synthetase family.</text>
</comment>
<protein>
    <recommendedName>
        <fullName evidence="1">Adenylosuccinate synthetase</fullName>
        <shortName evidence="1">AMPSase</shortName>
        <shortName evidence="1">AdSS</shortName>
        <ecNumber evidence="1">6.3.4.4</ecNumber>
    </recommendedName>
    <alternativeName>
        <fullName evidence="1">IMP--aspartate ligase</fullName>
    </alternativeName>
</protein>
<proteinExistence type="inferred from homology"/>